<gene>
    <name type="primary">ATG8B</name>
    <name type="synonym">APG8B</name>
    <name type="ORF">OsI_016860</name>
</gene>
<evidence type="ECO:0000250" key="1">
    <source>
        <dbReference type="UniProtKB" id="P38182"/>
    </source>
</evidence>
<evidence type="ECO:0000250" key="2">
    <source>
        <dbReference type="UniProtKB" id="Q2XPP5"/>
    </source>
</evidence>
<evidence type="ECO:0000250" key="3">
    <source>
        <dbReference type="UniProtKB" id="Q8LEM4"/>
    </source>
</evidence>
<evidence type="ECO:0000305" key="4"/>
<name>ATG8B_ORYSI</name>
<protein>
    <recommendedName>
        <fullName>Autophagy-related protein 8B</fullName>
    </recommendedName>
    <alternativeName>
        <fullName>Autophagy-related ubiquitin-like modifier ATG8B</fullName>
    </alternativeName>
</protein>
<feature type="chain" id="PRO_0000286925" description="Autophagy-related protein 8B">
    <location>
        <begin position="1"/>
        <end position="117"/>
    </location>
</feature>
<feature type="propeptide" id="PRO_0000286926" description="Removed in mature form" evidence="2">
    <location>
        <begin position="118"/>
        <end position="119"/>
    </location>
</feature>
<feature type="site" description="Cleavage; by ATG4" evidence="2">
    <location>
        <begin position="117"/>
        <end position="118"/>
    </location>
</feature>
<feature type="lipid moiety-binding region" description="Phosphatidylethanolamine amidated glycine" evidence="1">
    <location>
        <position position="117"/>
    </location>
</feature>
<keyword id="KW-0072">Autophagy</keyword>
<keyword id="KW-0963">Cytoplasm</keyword>
<keyword id="KW-0968">Cytoplasmic vesicle</keyword>
<keyword id="KW-0206">Cytoskeleton</keyword>
<keyword id="KW-0449">Lipoprotein</keyword>
<keyword id="KW-0472">Membrane</keyword>
<keyword id="KW-0493">Microtubule</keyword>
<keyword id="KW-0653">Protein transport</keyword>
<keyword id="KW-1185">Reference proteome</keyword>
<keyword id="KW-0813">Transport</keyword>
<keyword id="KW-0833">Ubl conjugation pathway</keyword>
<keyword id="KW-0926">Vacuole</keyword>
<comment type="function">
    <text evidence="1">Ubiquitin-like modifier involved in autophagosomes formation. May mediate the delivery of the autophagosomes to the vacuole via the microtubule cytoskeleton.</text>
</comment>
<comment type="subunit">
    <text evidence="2">Interacts with ATG4.</text>
</comment>
<comment type="subcellular location">
    <subcellularLocation>
        <location evidence="1">Cytoplasmic vesicle</location>
        <location evidence="1">Autophagosome membrane</location>
        <topology evidence="1">Lipid-anchor</topology>
    </subcellularLocation>
    <subcellularLocation>
        <location evidence="1">Vacuole membrane</location>
        <topology evidence="1">Lipid-anchor</topology>
    </subcellularLocation>
    <subcellularLocation>
        <location evidence="3">Cytoplasm</location>
        <location evidence="3">Cytoskeleton</location>
    </subcellularLocation>
</comment>
<comment type="PTM">
    <text evidence="1">The C-terminal 2 residues are removed by ATG4 to expose Gly-117 at the C-terminus. The C-terminal Gly is then amidated with phosphatidylethanolamine by an activating system similar to that for ubiquitin.</text>
</comment>
<comment type="similarity">
    <text evidence="4">Belongs to the ATG8 family.</text>
</comment>
<accession>A2XXR7</accession>
<organism>
    <name type="scientific">Oryza sativa subsp. indica</name>
    <name type="common">Rice</name>
    <dbReference type="NCBI Taxonomy" id="39946"/>
    <lineage>
        <taxon>Eukaryota</taxon>
        <taxon>Viridiplantae</taxon>
        <taxon>Streptophyta</taxon>
        <taxon>Embryophyta</taxon>
        <taxon>Tracheophyta</taxon>
        <taxon>Spermatophyta</taxon>
        <taxon>Magnoliopsida</taxon>
        <taxon>Liliopsida</taxon>
        <taxon>Poales</taxon>
        <taxon>Poaceae</taxon>
        <taxon>BOP clade</taxon>
        <taxon>Oryzoideae</taxon>
        <taxon>Oryzeae</taxon>
        <taxon>Oryzinae</taxon>
        <taxon>Oryza</taxon>
        <taxon>Oryza sativa</taxon>
    </lineage>
</organism>
<proteinExistence type="inferred from homology"/>
<dbReference type="EMBL" id="CM000129">
    <property type="protein sequence ID" value="EAY95627.1"/>
    <property type="molecule type" value="Genomic_DNA"/>
</dbReference>
<dbReference type="SMR" id="A2XXR7"/>
<dbReference type="STRING" id="39946.A2XXR7"/>
<dbReference type="EnsemblPlants" id="BGIOSGA014317-TA">
    <property type="protein sequence ID" value="BGIOSGA014317-PA"/>
    <property type="gene ID" value="BGIOSGA014317"/>
</dbReference>
<dbReference type="EnsemblPlants" id="OsGoSa_04g0026700.01">
    <property type="protein sequence ID" value="OsGoSa_04g0026700.01"/>
    <property type="gene ID" value="OsGoSa_04g0026700"/>
</dbReference>
<dbReference type="EnsemblPlants" id="OsGoSa_04g0026700.02">
    <property type="protein sequence ID" value="OsGoSa_04g0026700.02"/>
    <property type="gene ID" value="OsGoSa_04g0026700"/>
</dbReference>
<dbReference type="EnsemblPlants" id="OsGoSa_04g0026700.03">
    <property type="protein sequence ID" value="OsGoSa_04g0026700.03"/>
    <property type="gene ID" value="OsGoSa_04g0026700"/>
</dbReference>
<dbReference type="EnsemblPlants" id="OsIR64_04g0026440.01">
    <property type="protein sequence ID" value="OsIR64_04g0026440.01"/>
    <property type="gene ID" value="OsIR64_04g0026440"/>
</dbReference>
<dbReference type="EnsemblPlants" id="OsIR64_04g0026440.02">
    <property type="protein sequence ID" value="OsIR64_04g0026440.02"/>
    <property type="gene ID" value="OsIR64_04g0026440"/>
</dbReference>
<dbReference type="EnsemblPlants" id="OsIR64_04g0026440.03">
    <property type="protein sequence ID" value="OsIR64_04g0026440.03"/>
    <property type="gene ID" value="OsIR64_04g0026440"/>
</dbReference>
<dbReference type="EnsemblPlants" id="OsKYG_04g0026680.01">
    <property type="protein sequence ID" value="OsKYG_04g0026680.01"/>
    <property type="gene ID" value="OsKYG_04g0026680"/>
</dbReference>
<dbReference type="EnsemblPlants" id="OsKYG_04g0026680.02">
    <property type="protein sequence ID" value="OsKYG_04g0026680.02"/>
    <property type="gene ID" value="OsKYG_04g0026680"/>
</dbReference>
<dbReference type="EnsemblPlants" id="OsKYG_04g0026680.03">
    <property type="protein sequence ID" value="OsKYG_04g0026680.03"/>
    <property type="gene ID" value="OsKYG_04g0026680"/>
</dbReference>
<dbReference type="EnsemblPlants" id="OsLaMu_04g0027370.01">
    <property type="protein sequence ID" value="OsLaMu_04g0027370.01"/>
    <property type="gene ID" value="OsLaMu_04g0027370"/>
</dbReference>
<dbReference type="EnsemblPlants" id="OsLaMu_04g0027370.02">
    <property type="protein sequence ID" value="OsLaMu_04g0027370.02"/>
    <property type="gene ID" value="OsLaMu_04g0027370"/>
</dbReference>
<dbReference type="EnsemblPlants" id="OsLaMu_04g0027370.03">
    <property type="protein sequence ID" value="OsLaMu_04g0027370.03"/>
    <property type="gene ID" value="OsLaMu_04g0027370"/>
</dbReference>
<dbReference type="EnsemblPlants" id="OsLima_04g0026810.01">
    <property type="protein sequence ID" value="OsLima_04g0026810.01"/>
    <property type="gene ID" value="OsLima_04g0026810"/>
</dbReference>
<dbReference type="EnsemblPlants" id="OsLima_04g0026810.02">
    <property type="protein sequence ID" value="OsLima_04g0026810.02"/>
    <property type="gene ID" value="OsLima_04g0026810"/>
</dbReference>
<dbReference type="EnsemblPlants" id="OsLima_04g0026810.03">
    <property type="protein sequence ID" value="OsLima_04g0026810.03"/>
    <property type="gene ID" value="OsLima_04g0026810"/>
</dbReference>
<dbReference type="EnsemblPlants" id="OsLiXu_04g0027180.01">
    <property type="protein sequence ID" value="OsLiXu_04g0027180.01"/>
    <property type="gene ID" value="OsLiXu_04g0027180"/>
</dbReference>
<dbReference type="EnsemblPlants" id="OsLiXu_04g0027180.02">
    <property type="protein sequence ID" value="OsLiXu_04g0027180.02"/>
    <property type="gene ID" value="OsLiXu_04g0027180"/>
</dbReference>
<dbReference type="EnsemblPlants" id="OsLiXu_04g0027180.03">
    <property type="protein sequence ID" value="OsLiXu_04g0027180.03"/>
    <property type="gene ID" value="OsLiXu_04g0027180"/>
</dbReference>
<dbReference type="EnsemblPlants" id="OsMH63_04G027770_01">
    <property type="protein sequence ID" value="OsMH63_04G027770_01"/>
    <property type="gene ID" value="OsMH63_04G027770"/>
</dbReference>
<dbReference type="EnsemblPlants" id="OsMH63_04G027770_02">
    <property type="protein sequence ID" value="OsMH63_04G027770_02"/>
    <property type="gene ID" value="OsMH63_04G027770"/>
</dbReference>
<dbReference type="EnsemblPlants" id="OsMH63_04G027770_03">
    <property type="protein sequence ID" value="OsMH63_04G027770_03"/>
    <property type="gene ID" value="OsMH63_04G027770"/>
</dbReference>
<dbReference type="EnsemblPlants" id="OsPr106_04g0027610.01">
    <property type="protein sequence ID" value="OsPr106_04g0027610.01"/>
    <property type="gene ID" value="OsPr106_04g0027610"/>
</dbReference>
<dbReference type="EnsemblPlants" id="OsPr106_04g0027610.02">
    <property type="protein sequence ID" value="OsPr106_04g0027610.02"/>
    <property type="gene ID" value="OsPr106_04g0027610"/>
</dbReference>
<dbReference type="EnsemblPlants" id="OsPr106_04g0027610.03">
    <property type="protein sequence ID" value="OsPr106_04g0027610.03"/>
    <property type="gene ID" value="OsPr106_04g0027610"/>
</dbReference>
<dbReference type="EnsemblPlants" id="OsZS97_04G027940_01">
    <property type="protein sequence ID" value="OsZS97_04G027940_01"/>
    <property type="gene ID" value="OsZS97_04G027940"/>
</dbReference>
<dbReference type="EnsemblPlants" id="OsZS97_04G027940_02">
    <property type="protein sequence ID" value="OsZS97_04G027940_02"/>
    <property type="gene ID" value="OsZS97_04G027940"/>
</dbReference>
<dbReference type="EnsemblPlants" id="OsZS97_04G027940_03">
    <property type="protein sequence ID" value="OsZS97_04G027940_03"/>
    <property type="gene ID" value="OsZS97_04G027940"/>
</dbReference>
<dbReference type="Gramene" id="BGIOSGA014317-TA">
    <property type="protein sequence ID" value="BGIOSGA014317-PA"/>
    <property type="gene ID" value="BGIOSGA014317"/>
</dbReference>
<dbReference type="Gramene" id="OsGoSa_04g0026700.01">
    <property type="protein sequence ID" value="OsGoSa_04g0026700.01"/>
    <property type="gene ID" value="OsGoSa_04g0026700"/>
</dbReference>
<dbReference type="Gramene" id="OsGoSa_04g0026700.02">
    <property type="protein sequence ID" value="OsGoSa_04g0026700.02"/>
    <property type="gene ID" value="OsGoSa_04g0026700"/>
</dbReference>
<dbReference type="Gramene" id="OsGoSa_04g0026700.03">
    <property type="protein sequence ID" value="OsGoSa_04g0026700.03"/>
    <property type="gene ID" value="OsGoSa_04g0026700"/>
</dbReference>
<dbReference type="Gramene" id="OsIR64_04g0026440.01">
    <property type="protein sequence ID" value="OsIR64_04g0026440.01"/>
    <property type="gene ID" value="OsIR64_04g0026440"/>
</dbReference>
<dbReference type="Gramene" id="OsIR64_04g0026440.02">
    <property type="protein sequence ID" value="OsIR64_04g0026440.02"/>
    <property type="gene ID" value="OsIR64_04g0026440"/>
</dbReference>
<dbReference type="Gramene" id="OsIR64_04g0026440.03">
    <property type="protein sequence ID" value="OsIR64_04g0026440.03"/>
    <property type="gene ID" value="OsIR64_04g0026440"/>
</dbReference>
<dbReference type="Gramene" id="OsKYG_04g0026680.01">
    <property type="protein sequence ID" value="OsKYG_04g0026680.01"/>
    <property type="gene ID" value="OsKYG_04g0026680"/>
</dbReference>
<dbReference type="Gramene" id="OsKYG_04g0026680.02">
    <property type="protein sequence ID" value="OsKYG_04g0026680.02"/>
    <property type="gene ID" value="OsKYG_04g0026680"/>
</dbReference>
<dbReference type="Gramene" id="OsKYG_04g0026680.03">
    <property type="protein sequence ID" value="OsKYG_04g0026680.03"/>
    <property type="gene ID" value="OsKYG_04g0026680"/>
</dbReference>
<dbReference type="Gramene" id="OsLaMu_04g0027370.01">
    <property type="protein sequence ID" value="OsLaMu_04g0027370.01"/>
    <property type="gene ID" value="OsLaMu_04g0027370"/>
</dbReference>
<dbReference type="Gramene" id="OsLaMu_04g0027370.02">
    <property type="protein sequence ID" value="OsLaMu_04g0027370.02"/>
    <property type="gene ID" value="OsLaMu_04g0027370"/>
</dbReference>
<dbReference type="Gramene" id="OsLaMu_04g0027370.03">
    <property type="protein sequence ID" value="OsLaMu_04g0027370.03"/>
    <property type="gene ID" value="OsLaMu_04g0027370"/>
</dbReference>
<dbReference type="Gramene" id="OsLima_04g0026810.01">
    <property type="protein sequence ID" value="OsLima_04g0026810.01"/>
    <property type="gene ID" value="OsLima_04g0026810"/>
</dbReference>
<dbReference type="Gramene" id="OsLima_04g0026810.02">
    <property type="protein sequence ID" value="OsLima_04g0026810.02"/>
    <property type="gene ID" value="OsLima_04g0026810"/>
</dbReference>
<dbReference type="Gramene" id="OsLima_04g0026810.03">
    <property type="protein sequence ID" value="OsLima_04g0026810.03"/>
    <property type="gene ID" value="OsLima_04g0026810"/>
</dbReference>
<dbReference type="Gramene" id="OsLiXu_04g0027180.01">
    <property type="protein sequence ID" value="OsLiXu_04g0027180.01"/>
    <property type="gene ID" value="OsLiXu_04g0027180"/>
</dbReference>
<dbReference type="Gramene" id="OsLiXu_04g0027180.02">
    <property type="protein sequence ID" value="OsLiXu_04g0027180.02"/>
    <property type="gene ID" value="OsLiXu_04g0027180"/>
</dbReference>
<dbReference type="Gramene" id="OsLiXu_04g0027180.03">
    <property type="protein sequence ID" value="OsLiXu_04g0027180.03"/>
    <property type="gene ID" value="OsLiXu_04g0027180"/>
</dbReference>
<dbReference type="Gramene" id="OsMH63_04G027770_01">
    <property type="protein sequence ID" value="OsMH63_04G027770_01"/>
    <property type="gene ID" value="OsMH63_04G027770"/>
</dbReference>
<dbReference type="Gramene" id="OsMH63_04G027770_02">
    <property type="protein sequence ID" value="OsMH63_04G027770_02"/>
    <property type="gene ID" value="OsMH63_04G027770"/>
</dbReference>
<dbReference type="Gramene" id="OsMH63_04G027770_03">
    <property type="protein sequence ID" value="OsMH63_04G027770_03"/>
    <property type="gene ID" value="OsMH63_04G027770"/>
</dbReference>
<dbReference type="Gramene" id="OsPr106_04g0027610.01">
    <property type="protein sequence ID" value="OsPr106_04g0027610.01"/>
    <property type="gene ID" value="OsPr106_04g0027610"/>
</dbReference>
<dbReference type="Gramene" id="OsPr106_04g0027610.02">
    <property type="protein sequence ID" value="OsPr106_04g0027610.02"/>
    <property type="gene ID" value="OsPr106_04g0027610"/>
</dbReference>
<dbReference type="Gramene" id="OsPr106_04g0027610.03">
    <property type="protein sequence ID" value="OsPr106_04g0027610.03"/>
    <property type="gene ID" value="OsPr106_04g0027610"/>
</dbReference>
<dbReference type="Gramene" id="OsZS97_04G027940_01">
    <property type="protein sequence ID" value="OsZS97_04G027940_01"/>
    <property type="gene ID" value="OsZS97_04G027940"/>
</dbReference>
<dbReference type="Gramene" id="OsZS97_04G027940_02">
    <property type="protein sequence ID" value="OsZS97_04G027940_02"/>
    <property type="gene ID" value="OsZS97_04G027940"/>
</dbReference>
<dbReference type="Gramene" id="OsZS97_04G027940_03">
    <property type="protein sequence ID" value="OsZS97_04G027940_03"/>
    <property type="gene ID" value="OsZS97_04G027940"/>
</dbReference>
<dbReference type="HOGENOM" id="CLU_119276_0_1_1"/>
<dbReference type="OMA" id="QDWISIN"/>
<dbReference type="OrthoDB" id="6738456at2759"/>
<dbReference type="Proteomes" id="UP000007015">
    <property type="component" value="Chromosome 4"/>
</dbReference>
<dbReference type="GO" id="GO:0000421">
    <property type="term" value="C:autophagosome membrane"/>
    <property type="evidence" value="ECO:0007669"/>
    <property type="project" value="UniProtKB-SubCell"/>
</dbReference>
<dbReference type="GO" id="GO:0031410">
    <property type="term" value="C:cytoplasmic vesicle"/>
    <property type="evidence" value="ECO:0007669"/>
    <property type="project" value="UniProtKB-KW"/>
</dbReference>
<dbReference type="GO" id="GO:0005874">
    <property type="term" value="C:microtubule"/>
    <property type="evidence" value="ECO:0007669"/>
    <property type="project" value="UniProtKB-KW"/>
</dbReference>
<dbReference type="GO" id="GO:0006914">
    <property type="term" value="P:autophagy"/>
    <property type="evidence" value="ECO:0007669"/>
    <property type="project" value="UniProtKB-KW"/>
</dbReference>
<dbReference type="GO" id="GO:0015031">
    <property type="term" value="P:protein transport"/>
    <property type="evidence" value="ECO:0007669"/>
    <property type="project" value="UniProtKB-KW"/>
</dbReference>
<dbReference type="CDD" id="cd16128">
    <property type="entry name" value="Ubl_ATG8"/>
    <property type="match status" value="1"/>
</dbReference>
<dbReference type="FunFam" id="3.10.20.90:FF:000010">
    <property type="entry name" value="Autophagy-related protein"/>
    <property type="match status" value="1"/>
</dbReference>
<dbReference type="Gene3D" id="3.10.20.90">
    <property type="entry name" value="Phosphatidylinositol 3-kinase Catalytic Subunit, Chain A, domain 1"/>
    <property type="match status" value="1"/>
</dbReference>
<dbReference type="InterPro" id="IPR004241">
    <property type="entry name" value="Atg8-like"/>
</dbReference>
<dbReference type="InterPro" id="IPR029071">
    <property type="entry name" value="Ubiquitin-like_domsf"/>
</dbReference>
<dbReference type="PANTHER" id="PTHR10969">
    <property type="entry name" value="MICROTUBULE-ASSOCIATED PROTEINS 1A/1B LIGHT CHAIN 3-RELATED"/>
    <property type="match status" value="1"/>
</dbReference>
<dbReference type="Pfam" id="PF02991">
    <property type="entry name" value="ATG8"/>
    <property type="match status" value="1"/>
</dbReference>
<dbReference type="SUPFAM" id="SSF54236">
    <property type="entry name" value="Ubiquitin-like"/>
    <property type="match status" value="1"/>
</dbReference>
<reference key="1">
    <citation type="journal article" date="2005" name="PLoS Biol.">
        <title>The genomes of Oryza sativa: a history of duplications.</title>
        <authorList>
            <person name="Yu J."/>
            <person name="Wang J."/>
            <person name="Lin W."/>
            <person name="Li S."/>
            <person name="Li H."/>
            <person name="Zhou J."/>
            <person name="Ni P."/>
            <person name="Dong W."/>
            <person name="Hu S."/>
            <person name="Zeng C."/>
            <person name="Zhang J."/>
            <person name="Zhang Y."/>
            <person name="Li R."/>
            <person name="Xu Z."/>
            <person name="Li S."/>
            <person name="Li X."/>
            <person name="Zheng H."/>
            <person name="Cong L."/>
            <person name="Lin L."/>
            <person name="Yin J."/>
            <person name="Geng J."/>
            <person name="Li G."/>
            <person name="Shi J."/>
            <person name="Liu J."/>
            <person name="Lv H."/>
            <person name="Li J."/>
            <person name="Wang J."/>
            <person name="Deng Y."/>
            <person name="Ran L."/>
            <person name="Shi X."/>
            <person name="Wang X."/>
            <person name="Wu Q."/>
            <person name="Li C."/>
            <person name="Ren X."/>
            <person name="Wang J."/>
            <person name="Wang X."/>
            <person name="Li D."/>
            <person name="Liu D."/>
            <person name="Zhang X."/>
            <person name="Ji Z."/>
            <person name="Zhao W."/>
            <person name="Sun Y."/>
            <person name="Zhang Z."/>
            <person name="Bao J."/>
            <person name="Han Y."/>
            <person name="Dong L."/>
            <person name="Ji J."/>
            <person name="Chen P."/>
            <person name="Wu S."/>
            <person name="Liu J."/>
            <person name="Xiao Y."/>
            <person name="Bu D."/>
            <person name="Tan J."/>
            <person name="Yang L."/>
            <person name="Ye C."/>
            <person name="Zhang J."/>
            <person name="Xu J."/>
            <person name="Zhou Y."/>
            <person name="Yu Y."/>
            <person name="Zhang B."/>
            <person name="Zhuang S."/>
            <person name="Wei H."/>
            <person name="Liu B."/>
            <person name="Lei M."/>
            <person name="Yu H."/>
            <person name="Li Y."/>
            <person name="Xu H."/>
            <person name="Wei S."/>
            <person name="He X."/>
            <person name="Fang L."/>
            <person name="Zhang Z."/>
            <person name="Zhang Y."/>
            <person name="Huang X."/>
            <person name="Su Z."/>
            <person name="Tong W."/>
            <person name="Li J."/>
            <person name="Tong Z."/>
            <person name="Li S."/>
            <person name="Ye J."/>
            <person name="Wang L."/>
            <person name="Fang L."/>
            <person name="Lei T."/>
            <person name="Chen C.-S."/>
            <person name="Chen H.-C."/>
            <person name="Xu Z."/>
            <person name="Li H."/>
            <person name="Huang H."/>
            <person name="Zhang F."/>
            <person name="Xu H."/>
            <person name="Li N."/>
            <person name="Zhao C."/>
            <person name="Li S."/>
            <person name="Dong L."/>
            <person name="Huang Y."/>
            <person name="Li L."/>
            <person name="Xi Y."/>
            <person name="Qi Q."/>
            <person name="Li W."/>
            <person name="Zhang B."/>
            <person name="Hu W."/>
            <person name="Zhang Y."/>
            <person name="Tian X."/>
            <person name="Jiao Y."/>
            <person name="Liang X."/>
            <person name="Jin J."/>
            <person name="Gao L."/>
            <person name="Zheng W."/>
            <person name="Hao B."/>
            <person name="Liu S.-M."/>
            <person name="Wang W."/>
            <person name="Yuan L."/>
            <person name="Cao M."/>
            <person name="McDermott J."/>
            <person name="Samudrala R."/>
            <person name="Wang J."/>
            <person name="Wong G.K.-S."/>
            <person name="Yang H."/>
        </authorList>
    </citation>
    <scope>NUCLEOTIDE SEQUENCE [LARGE SCALE GENOMIC DNA]</scope>
    <source>
        <strain>cv. 93-11</strain>
    </source>
</reference>
<sequence length="119" mass="13733">MAKSSFKLDHTLERRQAEANRIREKYSDRIPVIVEKAERSDIPDIDKKKYLVPADLTVGQFVYVVRKRIKLSPEKAIFIFVKNTLPPTAALMSAIYEENKDEDGFLYMTYSGENTFGLL</sequence>